<organism>
    <name type="scientific">Trichomonas vaginalis</name>
    <dbReference type="NCBI Taxonomy" id="5722"/>
    <lineage>
        <taxon>Eukaryota</taxon>
        <taxon>Metamonada</taxon>
        <taxon>Parabasalia</taxon>
        <taxon>Trichomonadida</taxon>
        <taxon>Trichomonadidae</taxon>
        <taxon>Trichomonas</taxon>
    </lineage>
</organism>
<keyword id="KW-0903">Direct protein sequencing</keyword>
<keyword id="KW-0377">Hydrogenosome</keyword>
<keyword id="KW-0436">Ligase</keyword>
<keyword id="KW-0547">Nucleotide-binding</keyword>
<keyword id="KW-0809">Transit peptide</keyword>
<keyword id="KW-0816">Tricarboxylic acid cycle</keyword>
<evidence type="ECO:0000255" key="1">
    <source>
        <dbReference type="HAMAP-Rule" id="MF_03222"/>
    </source>
</evidence>
<evidence type="ECO:0000269" key="2">
    <source>
    </source>
</evidence>
<dbReference type="EC" id="6.2.1.5" evidence="1"/>
<dbReference type="EMBL" id="L31930">
    <property type="protein sequence ID" value="AAC41559.1"/>
    <property type="molecule type" value="Genomic_DNA"/>
</dbReference>
<dbReference type="SMR" id="P53400"/>
<dbReference type="VEuPathDB" id="TrichDB:TVAG_047890"/>
<dbReference type="VEuPathDB" id="TrichDB:TVAGG3_0657380"/>
<dbReference type="eggNOG" id="KOG1255">
    <property type="taxonomic scope" value="Eukaryota"/>
</dbReference>
<dbReference type="OMA" id="IFCEPGG"/>
<dbReference type="BioCyc" id="MetaCyc:MONOMER-13301"/>
<dbReference type="UniPathway" id="UPA00223">
    <property type="reaction ID" value="UER00999"/>
</dbReference>
<dbReference type="GO" id="GO:0034492">
    <property type="term" value="C:hydrogenosome lumen"/>
    <property type="evidence" value="ECO:0007669"/>
    <property type="project" value="UniProtKB-SubCell"/>
</dbReference>
<dbReference type="GO" id="GO:0005739">
    <property type="term" value="C:mitochondrion"/>
    <property type="evidence" value="ECO:0007669"/>
    <property type="project" value="TreeGrafter"/>
</dbReference>
<dbReference type="GO" id="GO:0009361">
    <property type="term" value="C:succinate-CoA ligase complex (ADP-forming)"/>
    <property type="evidence" value="ECO:0007669"/>
    <property type="project" value="TreeGrafter"/>
</dbReference>
<dbReference type="GO" id="GO:0000166">
    <property type="term" value="F:nucleotide binding"/>
    <property type="evidence" value="ECO:0007669"/>
    <property type="project" value="UniProtKB-KW"/>
</dbReference>
<dbReference type="GO" id="GO:0004775">
    <property type="term" value="F:succinate-CoA ligase (ADP-forming) activity"/>
    <property type="evidence" value="ECO:0007669"/>
    <property type="project" value="UniProtKB-UniRule"/>
</dbReference>
<dbReference type="GO" id="GO:0004776">
    <property type="term" value="F:succinate-CoA ligase (GDP-forming) activity"/>
    <property type="evidence" value="ECO:0007669"/>
    <property type="project" value="TreeGrafter"/>
</dbReference>
<dbReference type="GO" id="GO:0006099">
    <property type="term" value="P:tricarboxylic acid cycle"/>
    <property type="evidence" value="ECO:0007669"/>
    <property type="project" value="UniProtKB-UniRule"/>
</dbReference>
<dbReference type="FunFam" id="3.40.50.261:FF:000006">
    <property type="entry name" value="Succinate--CoA ligase [ADP-forming] subunit alpha"/>
    <property type="match status" value="1"/>
</dbReference>
<dbReference type="FunFam" id="3.40.50.720:FF:000277">
    <property type="entry name" value="Succinate--CoA ligase [ADP-forming] subunit alpha"/>
    <property type="match status" value="1"/>
</dbReference>
<dbReference type="Gene3D" id="3.40.50.720">
    <property type="entry name" value="NAD(P)-binding Rossmann-like Domain"/>
    <property type="match status" value="1"/>
</dbReference>
<dbReference type="Gene3D" id="3.40.50.261">
    <property type="entry name" value="Succinyl-CoA synthetase domains"/>
    <property type="match status" value="1"/>
</dbReference>
<dbReference type="HAMAP" id="MF_01988">
    <property type="entry name" value="Succ_CoA_alpha"/>
    <property type="match status" value="1"/>
</dbReference>
<dbReference type="InterPro" id="IPR017440">
    <property type="entry name" value="Cit_synth/succinyl-CoA_lig_AS"/>
</dbReference>
<dbReference type="InterPro" id="IPR033847">
    <property type="entry name" value="Citrt_syn/SCS-alpha_CS"/>
</dbReference>
<dbReference type="InterPro" id="IPR003781">
    <property type="entry name" value="CoA-bd"/>
</dbReference>
<dbReference type="InterPro" id="IPR005810">
    <property type="entry name" value="CoA_lig_alpha"/>
</dbReference>
<dbReference type="InterPro" id="IPR036291">
    <property type="entry name" value="NAD(P)-bd_dom_sf"/>
</dbReference>
<dbReference type="InterPro" id="IPR005811">
    <property type="entry name" value="SUCC_ACL_C"/>
</dbReference>
<dbReference type="InterPro" id="IPR016102">
    <property type="entry name" value="Succinyl-CoA_synth-like"/>
</dbReference>
<dbReference type="NCBIfam" id="NF004230">
    <property type="entry name" value="PRK05678.1"/>
    <property type="match status" value="1"/>
</dbReference>
<dbReference type="NCBIfam" id="TIGR01019">
    <property type="entry name" value="sucCoAalpha"/>
    <property type="match status" value="1"/>
</dbReference>
<dbReference type="PANTHER" id="PTHR11117:SF2">
    <property type="entry name" value="SUCCINATE--COA LIGASE [ADP_GDP-FORMING] SUBUNIT ALPHA, MITOCHONDRIAL"/>
    <property type="match status" value="1"/>
</dbReference>
<dbReference type="PANTHER" id="PTHR11117">
    <property type="entry name" value="SUCCINYL-COA LIGASE SUBUNIT ALPHA"/>
    <property type="match status" value="1"/>
</dbReference>
<dbReference type="Pfam" id="PF02629">
    <property type="entry name" value="CoA_binding"/>
    <property type="match status" value="1"/>
</dbReference>
<dbReference type="Pfam" id="PF00549">
    <property type="entry name" value="Ligase_CoA"/>
    <property type="match status" value="1"/>
</dbReference>
<dbReference type="PIRSF" id="PIRSF001553">
    <property type="entry name" value="SucCS_alpha"/>
    <property type="match status" value="1"/>
</dbReference>
<dbReference type="PRINTS" id="PR01798">
    <property type="entry name" value="SCOASYNTHASE"/>
</dbReference>
<dbReference type="SMART" id="SM00881">
    <property type="entry name" value="CoA_binding"/>
    <property type="match status" value="1"/>
</dbReference>
<dbReference type="SUPFAM" id="SSF51735">
    <property type="entry name" value="NAD(P)-binding Rossmann-fold domains"/>
    <property type="match status" value="1"/>
</dbReference>
<dbReference type="SUPFAM" id="SSF52210">
    <property type="entry name" value="Succinyl-CoA synthetase domains"/>
    <property type="match status" value="1"/>
</dbReference>
<dbReference type="PROSITE" id="PS01216">
    <property type="entry name" value="SUCCINYL_COA_LIG_1"/>
    <property type="match status" value="1"/>
</dbReference>
<dbReference type="PROSITE" id="PS00399">
    <property type="entry name" value="SUCCINYL_COA_LIG_2"/>
    <property type="match status" value="1"/>
</dbReference>
<accession>P53400</accession>
<protein>
    <recommendedName>
        <fullName evidence="1">Succinate--CoA ligase [ADP-forming] subunit alpha-2, mitochondrial</fullName>
        <ecNumber evidence="1">6.2.1.5</ecNumber>
    </recommendedName>
    <alternativeName>
        <fullName evidence="1">Succinyl-CoA synthetase subunit alpha-2</fullName>
        <shortName evidence="1">SCS-alpha-2</shortName>
    </alternativeName>
</protein>
<sequence length="309" mass="32653">MLSSSFERNLHQPLLFIDKDTRVVIQGIGNQGQYHSRLMREYGTKVVGAVHPKKAGKIIAGLPIFKNMKEVVKRTDANASLIFVPAPGAAAACIEAAEAGMGLVVCITEHIPQHDMIKVKKVMKETGCQLIGPNCPGLIQPGTHTKLGIIPTNIFRNGKIGIVSRSGTLTYEAAYATTQAGLGQSTVVGIGGDPFAGQLHTDVIKRFAADPQTEGIILIGEIGGTSEEDAAEWIAKTKLTQEKPVVAFIAGATAPPGKRMGHAGAIVSGGKGTAEGKYKALEAAGVRIARHPGNMGKFIFEEMKRLGKI</sequence>
<name>SUCA2_TRIVA</name>
<comment type="function">
    <text evidence="1">Succinyl-CoA synthetase functions in the citric acid cycle (TCA), coupling the hydrolysis of succinyl-CoA to the synthesis of ATP and thus represents the only step of substrate-level phosphorylation in the TCA. The alpha subunit of the enzyme binds the substrates coenzyme A and phosphate, while succinate binding and nucleotide specificity is provided by the beta subunit.</text>
</comment>
<comment type="catalytic activity">
    <reaction evidence="1">
        <text>succinate + ATP + CoA = succinyl-CoA + ADP + phosphate</text>
        <dbReference type="Rhea" id="RHEA:17661"/>
        <dbReference type="ChEBI" id="CHEBI:30031"/>
        <dbReference type="ChEBI" id="CHEBI:30616"/>
        <dbReference type="ChEBI" id="CHEBI:43474"/>
        <dbReference type="ChEBI" id="CHEBI:57287"/>
        <dbReference type="ChEBI" id="CHEBI:57292"/>
        <dbReference type="ChEBI" id="CHEBI:456216"/>
        <dbReference type="EC" id="6.2.1.5"/>
    </reaction>
</comment>
<comment type="pathway">
    <text evidence="1">Carbohydrate metabolism; tricarboxylic acid cycle; succinate from succinyl-CoA (ligase route): step 1/1.</text>
</comment>
<comment type="subunit">
    <text evidence="1">Heterodimer of an alpha and a beta subunit.</text>
</comment>
<comment type="subcellular location">
    <subcellularLocation>
        <location evidence="2">Hydrogenosome lumen</location>
    </subcellularLocation>
</comment>
<comment type="similarity">
    <text evidence="1">Belongs to the succinate/malate CoA ligase alpha subunit family.</text>
</comment>
<gene>
    <name type="primary">ALPHA-SCS2</name>
</gene>
<reference key="1">
    <citation type="journal article" date="1994" name="Mol. Biochem. Parasitol.">
        <title>Molecular characterization of the alpha-subunit of Trichomonas vaginalis hydrogenosomal succinyl CoA synthetase.</title>
        <authorList>
            <person name="Lahti C.J."/>
            <person name="Bradley P.J."/>
            <person name="Johnson P.J."/>
        </authorList>
    </citation>
    <scope>NUCLEOTIDE SEQUENCE [GENOMIC DNA]</scope>
    <scope>PROTEIN SEQUENCE OF 10-14</scope>
    <scope>SUBCELLULAR LOCATION</scope>
    <source>
        <strain>ATCC 30001 / NIH-C1</strain>
    </source>
</reference>
<proteinExistence type="evidence at protein level"/>
<feature type="transit peptide" description="Hydrogenosome" evidence="2">
    <location>
        <begin position="1"/>
        <end position="9"/>
    </location>
</feature>
<feature type="chain" id="PRO_0000033347" description="Succinate--CoA ligase [ADP-forming] subunit alpha-2, mitochondrial">
    <location>
        <begin position="10"/>
        <end position="309"/>
    </location>
</feature>
<feature type="active site" description="Tele-phosphohistidine intermediate" evidence="1">
    <location>
        <position position="262"/>
    </location>
</feature>
<feature type="binding site" evidence="1">
    <location>
        <position position="54"/>
    </location>
    <ligand>
        <name>CoA</name>
        <dbReference type="ChEBI" id="CHEBI:57287"/>
    </ligand>
</feature>
<feature type="binding site" evidence="1">
    <location>
        <begin position="107"/>
        <end position="109"/>
    </location>
    <ligand>
        <name>CoA</name>
        <dbReference type="ChEBI" id="CHEBI:57287"/>
    </ligand>
</feature>
<feature type="binding site" evidence="1">
    <location>
        <position position="171"/>
    </location>
    <ligand>
        <name>substrate</name>
        <note>ligand shared with subunit beta</note>
    </ligand>
</feature>